<comment type="function">
    <text evidence="1">Formation of pseudouridine at positions 38, 39 and 40 in the anticodon stem and loop of transfer RNAs.</text>
</comment>
<comment type="catalytic activity">
    <reaction evidence="1">
        <text>uridine(38/39/40) in tRNA = pseudouridine(38/39/40) in tRNA</text>
        <dbReference type="Rhea" id="RHEA:22376"/>
        <dbReference type="Rhea" id="RHEA-COMP:10085"/>
        <dbReference type="Rhea" id="RHEA-COMP:10087"/>
        <dbReference type="ChEBI" id="CHEBI:65314"/>
        <dbReference type="ChEBI" id="CHEBI:65315"/>
        <dbReference type="EC" id="5.4.99.12"/>
    </reaction>
</comment>
<comment type="similarity">
    <text evidence="1">Belongs to the tRNA pseudouridine synthase TruA family.</text>
</comment>
<comment type="sequence caution" evidence="2">
    <conflict type="erroneous initiation">
        <sequence resource="EMBL-CDS" id="CAC12061"/>
    </conflict>
</comment>
<gene>
    <name evidence="1" type="primary">truA</name>
    <name type="ordered locus">Ta0932</name>
</gene>
<proteinExistence type="inferred from homology"/>
<organism>
    <name type="scientific">Thermoplasma acidophilum (strain ATCC 25905 / DSM 1728 / JCM 9062 / NBRC 15155 / AMRC-C165)</name>
    <dbReference type="NCBI Taxonomy" id="273075"/>
    <lineage>
        <taxon>Archaea</taxon>
        <taxon>Methanobacteriati</taxon>
        <taxon>Thermoplasmatota</taxon>
        <taxon>Thermoplasmata</taxon>
        <taxon>Thermoplasmatales</taxon>
        <taxon>Thermoplasmataceae</taxon>
        <taxon>Thermoplasma</taxon>
    </lineage>
</organism>
<sequence>MTNYAFKFGYEGSYFTGFQRGNGDHSVEDTIIDTLKASGFDYAIKAAARTDRYVSALSNVFSLETGRSPEAVAGLINSRIDHIYVHSYAEVPDDFNPRHCTFKTYRYYILRQDLDCISLDINLGKFIGTHDFRRFVRADSRNTVRTIINASCKNDNGLLYLEFSARSFLWNQIRTMVAFILDNIGVETDPFSTSERYPRVARAQNLLLWDIYYDGIEFRKVKKIPKKMQGVYENSIMNYILAENLMHRFGIA</sequence>
<evidence type="ECO:0000255" key="1">
    <source>
        <dbReference type="HAMAP-Rule" id="MF_00171"/>
    </source>
</evidence>
<evidence type="ECO:0000305" key="2"/>
<accession>Q9HJN5</accession>
<dbReference type="EC" id="5.4.99.12" evidence="1"/>
<dbReference type="EMBL" id="AL445066">
    <property type="protein sequence ID" value="CAC12061.1"/>
    <property type="status" value="ALT_INIT"/>
    <property type="molecule type" value="Genomic_DNA"/>
</dbReference>
<dbReference type="RefSeq" id="WP_010901341.1">
    <property type="nucleotide sequence ID" value="NC_002578.1"/>
</dbReference>
<dbReference type="SMR" id="Q9HJN5"/>
<dbReference type="STRING" id="273075.gene:9572149"/>
<dbReference type="PaxDb" id="273075-Ta0932m"/>
<dbReference type="EnsemblBacteria" id="CAC12061">
    <property type="protein sequence ID" value="CAC12061"/>
    <property type="gene ID" value="CAC12061"/>
</dbReference>
<dbReference type="KEGG" id="tac:Ta0932"/>
<dbReference type="eggNOG" id="arCOG04449">
    <property type="taxonomic scope" value="Archaea"/>
</dbReference>
<dbReference type="HOGENOM" id="CLU_014673_4_2_2"/>
<dbReference type="InParanoid" id="Q9HJN5"/>
<dbReference type="OrthoDB" id="25720at2157"/>
<dbReference type="Proteomes" id="UP000001024">
    <property type="component" value="Chromosome"/>
</dbReference>
<dbReference type="GO" id="GO:0003723">
    <property type="term" value="F:RNA binding"/>
    <property type="evidence" value="ECO:0007669"/>
    <property type="project" value="InterPro"/>
</dbReference>
<dbReference type="GO" id="GO:0160147">
    <property type="term" value="F:tRNA pseudouridine(38-40) synthase activity"/>
    <property type="evidence" value="ECO:0007669"/>
    <property type="project" value="UniProtKB-EC"/>
</dbReference>
<dbReference type="GO" id="GO:0031119">
    <property type="term" value="P:tRNA pseudouridine synthesis"/>
    <property type="evidence" value="ECO:0007669"/>
    <property type="project" value="UniProtKB-UniRule"/>
</dbReference>
<dbReference type="CDD" id="cd00497">
    <property type="entry name" value="PseudoU_synth_TruA_like"/>
    <property type="match status" value="1"/>
</dbReference>
<dbReference type="Gene3D" id="3.30.70.660">
    <property type="entry name" value="Pseudouridine synthase I, catalytic domain, C-terminal subdomain"/>
    <property type="match status" value="1"/>
</dbReference>
<dbReference type="Gene3D" id="3.30.70.580">
    <property type="entry name" value="Pseudouridine synthase I, catalytic domain, N-terminal subdomain"/>
    <property type="match status" value="1"/>
</dbReference>
<dbReference type="HAMAP" id="MF_00171">
    <property type="entry name" value="TruA"/>
    <property type="match status" value="1"/>
</dbReference>
<dbReference type="InterPro" id="IPR020103">
    <property type="entry name" value="PsdUridine_synth_cat_dom_sf"/>
</dbReference>
<dbReference type="InterPro" id="IPR001406">
    <property type="entry name" value="PsdUridine_synth_TruA"/>
</dbReference>
<dbReference type="InterPro" id="IPR020097">
    <property type="entry name" value="PsdUridine_synth_TruA_a/b_dom"/>
</dbReference>
<dbReference type="InterPro" id="IPR020095">
    <property type="entry name" value="PsdUridine_synth_TruA_C"/>
</dbReference>
<dbReference type="InterPro" id="IPR020094">
    <property type="entry name" value="TruA/RsuA/RluB/E/F_N"/>
</dbReference>
<dbReference type="PANTHER" id="PTHR11142">
    <property type="entry name" value="PSEUDOURIDYLATE SYNTHASE"/>
    <property type="match status" value="1"/>
</dbReference>
<dbReference type="PANTHER" id="PTHR11142:SF0">
    <property type="entry name" value="TRNA PSEUDOURIDINE SYNTHASE-LIKE 1"/>
    <property type="match status" value="1"/>
</dbReference>
<dbReference type="Pfam" id="PF01416">
    <property type="entry name" value="PseudoU_synth_1"/>
    <property type="match status" value="1"/>
</dbReference>
<dbReference type="PIRSF" id="PIRSF001430">
    <property type="entry name" value="tRNA_psdUrid_synth"/>
    <property type="match status" value="1"/>
</dbReference>
<dbReference type="SUPFAM" id="SSF55120">
    <property type="entry name" value="Pseudouridine synthase"/>
    <property type="match status" value="1"/>
</dbReference>
<protein>
    <recommendedName>
        <fullName evidence="1">tRNA pseudouridine synthase A</fullName>
        <ecNumber evidence="1">5.4.99.12</ecNumber>
    </recommendedName>
    <alternativeName>
        <fullName evidence="1">tRNA pseudouridine(38-40) synthase</fullName>
    </alternativeName>
    <alternativeName>
        <fullName evidence="1">tRNA pseudouridylate synthase I</fullName>
    </alternativeName>
    <alternativeName>
        <fullName evidence="1">tRNA-uridine isomerase I</fullName>
    </alternativeName>
</protein>
<reference key="1">
    <citation type="journal article" date="2000" name="Nature">
        <title>The genome sequence of the thermoacidophilic scavenger Thermoplasma acidophilum.</title>
        <authorList>
            <person name="Ruepp A."/>
            <person name="Graml W."/>
            <person name="Santos-Martinez M.-L."/>
            <person name="Koretke K.K."/>
            <person name="Volker C."/>
            <person name="Mewes H.-W."/>
            <person name="Frishman D."/>
            <person name="Stocker S."/>
            <person name="Lupas A.N."/>
            <person name="Baumeister W."/>
        </authorList>
    </citation>
    <scope>NUCLEOTIDE SEQUENCE [LARGE SCALE GENOMIC DNA]</scope>
    <source>
        <strain>ATCC 25905 / DSM 1728 / JCM 9062 / NBRC 15155 / AMRC-C165</strain>
    </source>
</reference>
<keyword id="KW-0413">Isomerase</keyword>
<keyword id="KW-1185">Reference proteome</keyword>
<keyword id="KW-0819">tRNA processing</keyword>
<feature type="chain" id="PRO_0000057515" description="tRNA pseudouridine synthase A">
    <location>
        <begin position="1"/>
        <end position="252"/>
    </location>
</feature>
<feature type="active site" description="Nucleophile" evidence="1">
    <location>
        <position position="51"/>
    </location>
</feature>
<feature type="binding site" evidence="1">
    <location>
        <position position="105"/>
    </location>
    <ligand>
        <name>substrate</name>
    </ligand>
</feature>
<name>TRUA_THEAC</name>